<organism>
    <name type="scientific">Phasmahyla jandaia</name>
    <name type="common">Jandaia leaf frog</name>
    <name type="synonym">Phyllomedusa jandaia</name>
    <dbReference type="NCBI Taxonomy" id="762504"/>
    <lineage>
        <taxon>Eukaryota</taxon>
        <taxon>Metazoa</taxon>
        <taxon>Chordata</taxon>
        <taxon>Craniata</taxon>
        <taxon>Vertebrata</taxon>
        <taxon>Euteleostomi</taxon>
        <taxon>Amphibia</taxon>
        <taxon>Batrachia</taxon>
        <taxon>Anura</taxon>
        <taxon>Neobatrachia</taxon>
        <taxon>Hyloidea</taxon>
        <taxon>Hylidae</taxon>
        <taxon>Phyllomedusinae</taxon>
        <taxon>Phasmahyla</taxon>
    </lineage>
</organism>
<protein>
    <recommendedName>
        <fullName evidence="4">Dermaseptin-J1</fullName>
        <shortName evidence="4">DRS-J1</shortName>
    </recommendedName>
</protein>
<reference evidence="5" key="1">
    <citation type="journal article" date="2011" name="Toxicon">
        <title>Peptidomic dissection of the skin secretion of Phasmahyla jandaia (Bokermann and Sazima, 1978) (Anura, Hylidae, Phyllomedusinae).</title>
        <authorList>
            <person name="Rates B."/>
            <person name="Silva L.P."/>
            <person name="Ireno I.C."/>
            <person name="Leite F.S."/>
            <person name="Borges M.H."/>
            <person name="Bloch C. Jr."/>
            <person name="De Lima M.E."/>
            <person name="Pimenta A.M."/>
        </authorList>
    </citation>
    <scope>PROTEIN SEQUENCE</scope>
    <scope>SUBCELLULAR LOCATION</scope>
    <scope>TISSUE SPECIFICITY</scope>
    <scope>MASS SPECTROMETRY</scope>
    <scope>AMIDATION AT VAL-26</scope>
    <source>
        <tissue evidence="3">Skin secretion</tissue>
    </source>
</reference>
<dbReference type="GO" id="GO:0005576">
    <property type="term" value="C:extracellular region"/>
    <property type="evidence" value="ECO:0007669"/>
    <property type="project" value="UniProtKB-SubCell"/>
</dbReference>
<dbReference type="GO" id="GO:0042742">
    <property type="term" value="P:defense response to bacterium"/>
    <property type="evidence" value="ECO:0007669"/>
    <property type="project" value="UniProtKB-KW"/>
</dbReference>
<dbReference type="InterPro" id="IPR022731">
    <property type="entry name" value="Dermaseptin_dom"/>
</dbReference>
<dbReference type="Pfam" id="PF12121">
    <property type="entry name" value="DD_K"/>
    <property type="match status" value="1"/>
</dbReference>
<evidence type="ECO:0000250" key="1">
    <source>
        <dbReference type="UniProtKB" id="P84926"/>
    </source>
</evidence>
<evidence type="ECO:0000255" key="2"/>
<evidence type="ECO:0000269" key="3">
    <source>
    </source>
</evidence>
<evidence type="ECO:0000303" key="4">
    <source>
    </source>
</evidence>
<evidence type="ECO:0000305" key="5"/>
<name>DMS1_PHAJA</name>
<proteinExistence type="evidence at protein level"/>
<sequence length="26" mass="2597">GLWKNMLSGIGKLAGQAALGAVKTLV</sequence>
<accession>P86635</accession>
<feature type="peptide" id="PRO_0000404610" description="Dermaseptin-J1" evidence="3">
    <location>
        <begin position="1"/>
        <end position="26"/>
    </location>
</feature>
<feature type="modified residue" description="Valine amide" evidence="3">
    <location>
        <position position="26"/>
    </location>
</feature>
<feature type="unsure residue" description="L or I" evidence="3">
    <location>
        <position position="2"/>
    </location>
</feature>
<feature type="unsure residue" description="K or Q" evidence="3">
    <location>
        <position position="4"/>
    </location>
</feature>
<feature type="unsure residue" description="L or I" evidence="3">
    <location>
        <position position="7"/>
    </location>
</feature>
<feature type="unsure residue" description="I or L" evidence="3">
    <location>
        <position position="10"/>
    </location>
</feature>
<feature type="unsure residue" description="K or Q" evidence="3">
    <location>
        <position position="12"/>
    </location>
</feature>
<feature type="unsure residue" description="L or I" evidence="3">
    <location>
        <position position="13"/>
    </location>
</feature>
<feature type="unsure residue" description="Q or K" evidence="3">
    <location>
        <position position="16"/>
    </location>
</feature>
<feature type="unsure residue" description="L or I" evidence="3">
    <location>
        <position position="19"/>
    </location>
</feature>
<feature type="unsure residue" description="K or Q" evidence="3">
    <location>
        <position position="23"/>
    </location>
</feature>
<feature type="unsure residue" description="L or I" evidence="3">
    <location>
        <position position="25"/>
    </location>
</feature>
<comment type="function">
    <text evidence="1">Has antimicrobial activity.</text>
</comment>
<comment type="subcellular location">
    <subcellularLocation>
        <location evidence="3">Secreted</location>
    </subcellularLocation>
</comment>
<comment type="tissue specificity">
    <text evidence="3">Expressed by the skin glands.</text>
</comment>
<comment type="mass spectrometry" mass="2594.3" method="MALDI" evidence="3"/>
<comment type="similarity">
    <text evidence="2">Belongs to the frog skin active peptide (FSAP) family. Dermaseptin subfamily.</text>
</comment>
<keyword id="KW-0027">Amidation</keyword>
<keyword id="KW-0878">Amphibian defense peptide</keyword>
<keyword id="KW-0044">Antibiotic</keyword>
<keyword id="KW-0929">Antimicrobial</keyword>
<keyword id="KW-0903">Direct protein sequencing</keyword>
<keyword id="KW-0964">Secreted</keyword>